<proteinExistence type="inferred from homology"/>
<evidence type="ECO:0000255" key="1">
    <source>
        <dbReference type="HAMAP-Rule" id="MF_00123"/>
    </source>
</evidence>
<reference key="1">
    <citation type="journal article" date="2006" name="Proc. Natl. Acad. Sci. U.S.A.">
        <title>Identification of genes subject to positive selection in uropathogenic strains of Escherichia coli: a comparative genomics approach.</title>
        <authorList>
            <person name="Chen S.L."/>
            <person name="Hung C.-S."/>
            <person name="Xu J."/>
            <person name="Reigstad C.S."/>
            <person name="Magrini V."/>
            <person name="Sabo A."/>
            <person name="Blasiar D."/>
            <person name="Bieri T."/>
            <person name="Meyer R.R."/>
            <person name="Ozersky P."/>
            <person name="Armstrong J.R."/>
            <person name="Fulton R.S."/>
            <person name="Latreille J.P."/>
            <person name="Spieth J."/>
            <person name="Hooton T.M."/>
            <person name="Mardis E.R."/>
            <person name="Hultgren S.J."/>
            <person name="Gordon J.I."/>
        </authorList>
    </citation>
    <scope>NUCLEOTIDE SEQUENCE [LARGE SCALE GENOMIC DNA]</scope>
    <source>
        <strain>UTI89 / UPEC</strain>
    </source>
</reference>
<keyword id="KW-0030">Aminoacyl-tRNA synthetase</keyword>
<keyword id="KW-0067">ATP-binding</keyword>
<keyword id="KW-0963">Cytoplasm</keyword>
<keyword id="KW-0436">Ligase</keyword>
<keyword id="KW-0547">Nucleotide-binding</keyword>
<keyword id="KW-0648">Protein biosynthesis</keyword>
<comment type="catalytic activity">
    <reaction evidence="1">
        <text>tRNA(Arg) + L-arginine + ATP = L-arginyl-tRNA(Arg) + AMP + diphosphate</text>
        <dbReference type="Rhea" id="RHEA:20301"/>
        <dbReference type="Rhea" id="RHEA-COMP:9658"/>
        <dbReference type="Rhea" id="RHEA-COMP:9673"/>
        <dbReference type="ChEBI" id="CHEBI:30616"/>
        <dbReference type="ChEBI" id="CHEBI:32682"/>
        <dbReference type="ChEBI" id="CHEBI:33019"/>
        <dbReference type="ChEBI" id="CHEBI:78442"/>
        <dbReference type="ChEBI" id="CHEBI:78513"/>
        <dbReference type="ChEBI" id="CHEBI:456215"/>
        <dbReference type="EC" id="6.1.1.19"/>
    </reaction>
</comment>
<comment type="subunit">
    <text evidence="1">Monomer.</text>
</comment>
<comment type="subcellular location">
    <subcellularLocation>
        <location evidence="1">Cytoplasm</location>
    </subcellularLocation>
</comment>
<comment type="similarity">
    <text evidence="1">Belongs to the class-I aminoacyl-tRNA synthetase family.</text>
</comment>
<accession>Q1RAQ8</accession>
<name>SYR_ECOUT</name>
<dbReference type="EC" id="6.1.1.19" evidence="1"/>
<dbReference type="EMBL" id="CP000243">
    <property type="protein sequence ID" value="ABE07556.1"/>
    <property type="molecule type" value="Genomic_DNA"/>
</dbReference>
<dbReference type="RefSeq" id="WP_001025351.1">
    <property type="nucleotide sequence ID" value="NZ_CP064825.1"/>
</dbReference>
<dbReference type="SMR" id="Q1RAQ8"/>
<dbReference type="KEGG" id="eci:UTI89_C2080"/>
<dbReference type="HOGENOM" id="CLU_006406_5_1_6"/>
<dbReference type="Proteomes" id="UP000001952">
    <property type="component" value="Chromosome"/>
</dbReference>
<dbReference type="GO" id="GO:0005737">
    <property type="term" value="C:cytoplasm"/>
    <property type="evidence" value="ECO:0007669"/>
    <property type="project" value="UniProtKB-SubCell"/>
</dbReference>
<dbReference type="GO" id="GO:0004814">
    <property type="term" value="F:arginine-tRNA ligase activity"/>
    <property type="evidence" value="ECO:0007669"/>
    <property type="project" value="UniProtKB-UniRule"/>
</dbReference>
<dbReference type="GO" id="GO:0005524">
    <property type="term" value="F:ATP binding"/>
    <property type="evidence" value="ECO:0007669"/>
    <property type="project" value="UniProtKB-UniRule"/>
</dbReference>
<dbReference type="GO" id="GO:0006420">
    <property type="term" value="P:arginyl-tRNA aminoacylation"/>
    <property type="evidence" value="ECO:0007669"/>
    <property type="project" value="UniProtKB-UniRule"/>
</dbReference>
<dbReference type="CDD" id="cd07956">
    <property type="entry name" value="Anticodon_Ia_Arg"/>
    <property type="match status" value="1"/>
</dbReference>
<dbReference type="CDD" id="cd00671">
    <property type="entry name" value="ArgRS_core"/>
    <property type="match status" value="1"/>
</dbReference>
<dbReference type="FunFam" id="1.10.730.10:FF:000001">
    <property type="entry name" value="Arginine--tRNA ligase"/>
    <property type="match status" value="1"/>
</dbReference>
<dbReference type="FunFam" id="3.30.1360.70:FF:000001">
    <property type="entry name" value="Arginine--tRNA ligase"/>
    <property type="match status" value="1"/>
</dbReference>
<dbReference type="FunFam" id="3.40.50.620:FF:000030">
    <property type="entry name" value="Arginine--tRNA ligase"/>
    <property type="match status" value="1"/>
</dbReference>
<dbReference type="Gene3D" id="3.30.1360.70">
    <property type="entry name" value="Arginyl tRNA synthetase N-terminal domain"/>
    <property type="match status" value="1"/>
</dbReference>
<dbReference type="Gene3D" id="3.40.50.620">
    <property type="entry name" value="HUPs"/>
    <property type="match status" value="1"/>
</dbReference>
<dbReference type="Gene3D" id="1.10.730.10">
    <property type="entry name" value="Isoleucyl-tRNA Synthetase, Domain 1"/>
    <property type="match status" value="1"/>
</dbReference>
<dbReference type="HAMAP" id="MF_00123">
    <property type="entry name" value="Arg_tRNA_synth"/>
    <property type="match status" value="1"/>
</dbReference>
<dbReference type="InterPro" id="IPR001412">
    <property type="entry name" value="aa-tRNA-synth_I_CS"/>
</dbReference>
<dbReference type="InterPro" id="IPR001278">
    <property type="entry name" value="Arg-tRNA-ligase"/>
</dbReference>
<dbReference type="InterPro" id="IPR005148">
    <property type="entry name" value="Arg-tRNA-synth_N"/>
</dbReference>
<dbReference type="InterPro" id="IPR036695">
    <property type="entry name" value="Arg-tRNA-synth_N_sf"/>
</dbReference>
<dbReference type="InterPro" id="IPR035684">
    <property type="entry name" value="ArgRS_core"/>
</dbReference>
<dbReference type="InterPro" id="IPR008909">
    <property type="entry name" value="DALR_anticod-bd"/>
</dbReference>
<dbReference type="InterPro" id="IPR014729">
    <property type="entry name" value="Rossmann-like_a/b/a_fold"/>
</dbReference>
<dbReference type="InterPro" id="IPR009080">
    <property type="entry name" value="tRNAsynth_Ia_anticodon-bd"/>
</dbReference>
<dbReference type="NCBIfam" id="TIGR00456">
    <property type="entry name" value="argS"/>
    <property type="match status" value="1"/>
</dbReference>
<dbReference type="PANTHER" id="PTHR11956:SF5">
    <property type="entry name" value="ARGININE--TRNA LIGASE, CYTOPLASMIC"/>
    <property type="match status" value="1"/>
</dbReference>
<dbReference type="PANTHER" id="PTHR11956">
    <property type="entry name" value="ARGINYL-TRNA SYNTHETASE"/>
    <property type="match status" value="1"/>
</dbReference>
<dbReference type="Pfam" id="PF03485">
    <property type="entry name" value="Arg_tRNA_synt_N"/>
    <property type="match status" value="1"/>
</dbReference>
<dbReference type="Pfam" id="PF05746">
    <property type="entry name" value="DALR_1"/>
    <property type="match status" value="1"/>
</dbReference>
<dbReference type="Pfam" id="PF00750">
    <property type="entry name" value="tRNA-synt_1d"/>
    <property type="match status" value="1"/>
</dbReference>
<dbReference type="PRINTS" id="PR01038">
    <property type="entry name" value="TRNASYNTHARG"/>
</dbReference>
<dbReference type="SMART" id="SM01016">
    <property type="entry name" value="Arg_tRNA_synt_N"/>
    <property type="match status" value="1"/>
</dbReference>
<dbReference type="SMART" id="SM00836">
    <property type="entry name" value="DALR_1"/>
    <property type="match status" value="1"/>
</dbReference>
<dbReference type="SUPFAM" id="SSF47323">
    <property type="entry name" value="Anticodon-binding domain of a subclass of class I aminoacyl-tRNA synthetases"/>
    <property type="match status" value="1"/>
</dbReference>
<dbReference type="SUPFAM" id="SSF55190">
    <property type="entry name" value="Arginyl-tRNA synthetase (ArgRS), N-terminal 'additional' domain"/>
    <property type="match status" value="1"/>
</dbReference>
<dbReference type="SUPFAM" id="SSF52374">
    <property type="entry name" value="Nucleotidylyl transferase"/>
    <property type="match status" value="1"/>
</dbReference>
<dbReference type="PROSITE" id="PS00178">
    <property type="entry name" value="AA_TRNA_LIGASE_I"/>
    <property type="match status" value="1"/>
</dbReference>
<protein>
    <recommendedName>
        <fullName evidence="1">Arginine--tRNA ligase</fullName>
        <ecNumber evidence="1">6.1.1.19</ecNumber>
    </recommendedName>
    <alternativeName>
        <fullName evidence="1">Arginyl-tRNA synthetase</fullName>
        <shortName evidence="1">ArgRS</shortName>
    </alternativeName>
</protein>
<feature type="chain" id="PRO_1000018025" description="Arginine--tRNA ligase">
    <location>
        <begin position="1"/>
        <end position="577"/>
    </location>
</feature>
<feature type="short sequence motif" description="'HIGH' region">
    <location>
        <begin position="122"/>
        <end position="132"/>
    </location>
</feature>
<organism>
    <name type="scientific">Escherichia coli (strain UTI89 / UPEC)</name>
    <dbReference type="NCBI Taxonomy" id="364106"/>
    <lineage>
        <taxon>Bacteria</taxon>
        <taxon>Pseudomonadati</taxon>
        <taxon>Pseudomonadota</taxon>
        <taxon>Gammaproteobacteria</taxon>
        <taxon>Enterobacterales</taxon>
        <taxon>Enterobacteriaceae</taxon>
        <taxon>Escherichia</taxon>
    </lineage>
</organism>
<sequence length="577" mass="64712">MNIQALLSEKVRQAMIAAGAPADCEPQVRQSAKVQFGNYQANGMMAVAKKLGMAPRQLAEQVLTHLDLNGIASKVEIAGPGFINIFLDPAFLAEHVQQALASDRLGVAMPEKQTIVVDYSAPNVAKEMHVGHLRSTIIGDAAVRTLEFLGHKVIRANHVGDWGTQFGMLIAWLEKQQQENAGEMELADLEGFYRDAKKHYDEDEEFAERARNYVVKLQSGDEYFREMWRKLVDITMTQNQITYDRLNVTLTRDDVMGESLYNPMLPGIVADLKAKGLAVESEGATVVFLDEFKNKEGEPMGVIIQKKDGGYLYTTTDIACAKYRYETLHADRVLYYIDSRQHQHLMQAWAIVRKAGYVPESVPLEHHMFGMMLGKDGKPFKTRAGGTVKLADLLDEALERARRLVAEKNPDMPADELEKLANAVGIGAVKYADLSKNRTTDYIFDWDNMLAFEGNTAPYMQYAYTRVLSVFRKAEIDEEQLAAAPVIIREDREAQLAARLLQFEETLTVVAREGTPHVMCAYLYDLAGLFSGFYEHCPILSAENEEVRNSRLKLAQLTAKTLKLGLDTLGIETVERM</sequence>
<gene>
    <name evidence="1" type="primary">argS</name>
    <name type="ordered locus">UTI89_C2080</name>
</gene>